<comment type="function">
    <text evidence="2 3">Catalytic component of the NuA4 histone acetyltransferase (HAT) complex which is involved in epigenetic transcriptional activation of selected genes principally by acetylation of nucleosomal histones H4, H3, H2B, H2A and H2A variant H2A.Z (By similarity). Acetylates histone H4 to form H4K5ac, H4K8ac, H4K12ac and H4K16ac, histone H3 to form H3K14ac, and histone H2A to form H2AK4ac and H2AK7ac (By similarity). The NuA4 complex is involved in the DNA damage response and is required for chromosome segregation. The NuA4 complex plays a direct role in repair of DNA double-strand breaks (DSBs) through homologous recombination (By similarity). Recruitment to promoters depends on H3K4me. Also acetylates non-histone proteins (By similarity). In addition to protein acetyltransferase, can use different acyl-CoA substrates, such as 2-hydroxyisobutanoyl-CoA (2-hydroxyisobutyryl-CoA) or (2E)-butenoyl-CoA (crotonyl-CoA), and is able to mediate protein 2-hydroxyisobutyrylation and crotonylation, respectively (By similarity).</text>
</comment>
<comment type="catalytic activity">
    <reaction evidence="2">
        <text>L-lysyl-[histone] + acetyl-CoA = N(6)-acetyl-L-lysyl-[histone] + CoA + H(+)</text>
        <dbReference type="Rhea" id="RHEA:21992"/>
        <dbReference type="Rhea" id="RHEA-COMP:9845"/>
        <dbReference type="Rhea" id="RHEA-COMP:11338"/>
        <dbReference type="ChEBI" id="CHEBI:15378"/>
        <dbReference type="ChEBI" id="CHEBI:29969"/>
        <dbReference type="ChEBI" id="CHEBI:57287"/>
        <dbReference type="ChEBI" id="CHEBI:57288"/>
        <dbReference type="ChEBI" id="CHEBI:61930"/>
        <dbReference type="EC" id="2.3.1.48"/>
    </reaction>
    <physiologicalReaction direction="left-to-right" evidence="2">
        <dbReference type="Rhea" id="RHEA:21993"/>
    </physiologicalReaction>
</comment>
<comment type="catalytic activity">
    <reaction evidence="3">
        <text>L-lysyl-[protein] + acetyl-CoA = N(6)-acetyl-L-lysyl-[protein] + CoA + H(+)</text>
        <dbReference type="Rhea" id="RHEA:45948"/>
        <dbReference type="Rhea" id="RHEA-COMP:9752"/>
        <dbReference type="Rhea" id="RHEA-COMP:10731"/>
        <dbReference type="ChEBI" id="CHEBI:15378"/>
        <dbReference type="ChEBI" id="CHEBI:29969"/>
        <dbReference type="ChEBI" id="CHEBI:57287"/>
        <dbReference type="ChEBI" id="CHEBI:57288"/>
        <dbReference type="ChEBI" id="CHEBI:61930"/>
    </reaction>
    <physiologicalReaction direction="left-to-right" evidence="3">
        <dbReference type="Rhea" id="RHEA:45949"/>
    </physiologicalReaction>
</comment>
<comment type="catalytic activity">
    <reaction evidence="2">
        <text>2-hydroxyisobutanoyl-CoA + L-lysyl-[protein] = N(6)-(2-hydroxyisobutanoyl)-L-lysyl-[protein] + CoA + H(+)</text>
        <dbReference type="Rhea" id="RHEA:24180"/>
        <dbReference type="Rhea" id="RHEA-COMP:9752"/>
        <dbReference type="Rhea" id="RHEA-COMP:15921"/>
        <dbReference type="ChEBI" id="CHEBI:15378"/>
        <dbReference type="ChEBI" id="CHEBI:29969"/>
        <dbReference type="ChEBI" id="CHEBI:57287"/>
        <dbReference type="ChEBI" id="CHEBI:131780"/>
        <dbReference type="ChEBI" id="CHEBI:144968"/>
    </reaction>
    <physiologicalReaction direction="left-to-right" evidence="2">
        <dbReference type="Rhea" id="RHEA:24181"/>
    </physiologicalReaction>
</comment>
<comment type="catalytic activity">
    <reaction evidence="3">
        <text>(2E)-butenoyl-CoA + L-lysyl-[protein] = N(6)-(2E)-butenoyl-L-lysyl-[protein] + CoA + H(+)</text>
        <dbReference type="Rhea" id="RHEA:53908"/>
        <dbReference type="Rhea" id="RHEA-COMP:9752"/>
        <dbReference type="Rhea" id="RHEA-COMP:13707"/>
        <dbReference type="ChEBI" id="CHEBI:15378"/>
        <dbReference type="ChEBI" id="CHEBI:29969"/>
        <dbReference type="ChEBI" id="CHEBI:57287"/>
        <dbReference type="ChEBI" id="CHEBI:57332"/>
        <dbReference type="ChEBI" id="CHEBI:137954"/>
    </reaction>
    <physiologicalReaction direction="left-to-right" evidence="3">
        <dbReference type="Rhea" id="RHEA:53909"/>
    </physiologicalReaction>
</comment>
<comment type="subunit">
    <text evidence="3">Component of the NuA4 histone acetyltransferase complex.</text>
</comment>
<comment type="subcellular location">
    <subcellularLocation>
        <location evidence="2">Nucleus</location>
    </subcellularLocation>
    <subcellularLocation>
        <location evidence="2">Chromosome</location>
    </subcellularLocation>
    <text evidence="2">Following DNA damage, localizes to sites of DNA damage, such as double stand breaks (DSBs).</text>
</comment>
<comment type="domain">
    <text evidence="3">The ESA1-RPD3 motif is common to ESA1 and RPD3 and is required for ESA1 histone acetyl-transferase (HAT) activity and RPD3 histone deacetylase (HDAC) activity.</text>
</comment>
<comment type="PTM">
    <text evidence="3">Autoacetylation at Lys-263 is required for proper function.</text>
</comment>
<comment type="similarity">
    <text evidence="7">Belongs to the MYST (SAS/MOZ) family.</text>
</comment>
<protein>
    <recommendedName>
        <fullName>Histone acetyltransferase ESA1</fullName>
        <ecNumber evidence="3">2.3.1.48</ecNumber>
    </recommendedName>
    <alternativeName>
        <fullName evidence="7">Protein 2-hydroxyisobutyryltransferase ESA1</fullName>
        <ecNumber evidence="2">2.3.1.-</ecNumber>
    </alternativeName>
    <alternativeName>
        <fullName evidence="7">Protein acetyltransferase ESA1</fullName>
        <ecNumber evidence="3">2.3.1.-</ecNumber>
    </alternativeName>
    <alternativeName>
        <fullName evidence="7">Protein crotonyltransferase ESA1</fullName>
        <ecNumber evidence="3">2.3.1.-</ecNumber>
    </alternativeName>
</protein>
<accession>Q6FPH9</accession>
<sequence length="446" mass="52552">MAGAEVEEEAGIPKKIESTEEVLIKCQCWVRKDEEERLAEILSINARVSPSKFYVHYVNFNKRLDEWVTGDRINLDKEVIFPRPKRQLEEDTNKKQKKKKKFPQKAAVVESDAKSSEMGEGSDVMDLDNLNVRGLKDEEISREDEIKKLRTSGSMIQNPHEVAHVRNLSKIIMGKFEIEPWYFSPYPIELTDLDVVYIDDFTLQYFGSRKQYERYRKKCTLRHPPGNEIYRDDYVSFFEIDGRKQRTWCRNLCLLSKLFLDHKTLYYDVDPFLFYCMTRRDEMGHHFVGYFSKEKESADGYNVACILTLPQYQRMGYGRLLIEFSYELSKKEGKVGSPEKPLSDLGLLSYRAYWSDVLITLLVEHGKEVTIDEISSMTSMTTTDILHTLKTLNILRYYKGQHIIFLNDDILERYNQLKTKKRRHIDAEKLLWKPPVFTASQLRFAW</sequence>
<dbReference type="EC" id="2.3.1.48" evidence="3"/>
<dbReference type="EC" id="2.3.1.-" evidence="2 3"/>
<dbReference type="EMBL" id="CR380956">
    <property type="protein sequence ID" value="CAG60814.1"/>
    <property type="molecule type" value="Genomic_DNA"/>
</dbReference>
<dbReference type="RefSeq" id="XP_447865.1">
    <property type="nucleotide sequence ID" value="XM_447865.1"/>
</dbReference>
<dbReference type="SMR" id="Q6FPH9"/>
<dbReference type="FunCoup" id="Q6FPH9">
    <property type="interactions" value="1059"/>
</dbReference>
<dbReference type="STRING" id="284593.Q6FPH9"/>
<dbReference type="EnsemblFungi" id="CAGL0J03696g-T">
    <property type="protein sequence ID" value="CAGL0J03696g-T-p1"/>
    <property type="gene ID" value="CAGL0J03696g"/>
</dbReference>
<dbReference type="KEGG" id="cgr:2889685"/>
<dbReference type="CGD" id="CAL0129567">
    <property type="gene designation" value="CAGL0J03696g"/>
</dbReference>
<dbReference type="VEuPathDB" id="FungiDB:B1J91_J03696g"/>
<dbReference type="VEuPathDB" id="FungiDB:CAGL0J03696g"/>
<dbReference type="eggNOG" id="KOG2747">
    <property type="taxonomic scope" value="Eukaryota"/>
</dbReference>
<dbReference type="HOGENOM" id="CLU_011815_2_0_1"/>
<dbReference type="InParanoid" id="Q6FPH9"/>
<dbReference type="OMA" id="QYQRHGY"/>
<dbReference type="Proteomes" id="UP000002428">
    <property type="component" value="Chromosome J"/>
</dbReference>
<dbReference type="GO" id="GO:0035267">
    <property type="term" value="C:NuA4 histone acetyltransferase complex"/>
    <property type="evidence" value="ECO:0007669"/>
    <property type="project" value="EnsemblFungi"/>
</dbReference>
<dbReference type="GO" id="GO:0005721">
    <property type="term" value="C:pericentric heterochromatin"/>
    <property type="evidence" value="ECO:0007669"/>
    <property type="project" value="EnsemblFungi"/>
</dbReference>
<dbReference type="GO" id="GO:0035861">
    <property type="term" value="C:site of double-strand break"/>
    <property type="evidence" value="ECO:0007669"/>
    <property type="project" value="EnsemblFungi"/>
</dbReference>
<dbReference type="GO" id="GO:0000812">
    <property type="term" value="C:Swr1 complex"/>
    <property type="evidence" value="ECO:0007669"/>
    <property type="project" value="EnsemblFungi"/>
</dbReference>
<dbReference type="GO" id="GO:0003682">
    <property type="term" value="F:chromatin binding"/>
    <property type="evidence" value="ECO:0007669"/>
    <property type="project" value="TreeGrafter"/>
</dbReference>
<dbReference type="GO" id="GO:0044016">
    <property type="term" value="F:histone H3K4 acetyltransferase activity"/>
    <property type="evidence" value="ECO:0007669"/>
    <property type="project" value="EnsemblFungi"/>
</dbReference>
<dbReference type="GO" id="GO:0106226">
    <property type="term" value="F:peptide 2-hydroxyisobutyryltransferase activity"/>
    <property type="evidence" value="ECO:0007669"/>
    <property type="project" value="RHEA"/>
</dbReference>
<dbReference type="GO" id="GO:0140065">
    <property type="term" value="F:peptide butyryltransferase activity"/>
    <property type="evidence" value="ECO:0007669"/>
    <property type="project" value="EnsemblFungi"/>
</dbReference>
<dbReference type="GO" id="GO:0140064">
    <property type="term" value="F:peptide crotonyltransferase activity"/>
    <property type="evidence" value="ECO:0007669"/>
    <property type="project" value="RHEA"/>
</dbReference>
<dbReference type="GO" id="GO:0003712">
    <property type="term" value="F:transcription coregulator activity"/>
    <property type="evidence" value="ECO:0007669"/>
    <property type="project" value="TreeGrafter"/>
</dbReference>
<dbReference type="GO" id="GO:0006281">
    <property type="term" value="P:DNA repair"/>
    <property type="evidence" value="ECO:0007669"/>
    <property type="project" value="UniProtKB-KW"/>
</dbReference>
<dbReference type="GO" id="GO:0140861">
    <property type="term" value="P:DNA repair-dependent chromatin remodeling"/>
    <property type="evidence" value="ECO:0007669"/>
    <property type="project" value="EnsemblFungi"/>
</dbReference>
<dbReference type="GO" id="GO:0031453">
    <property type="term" value="P:positive regulation of heterochromatin formation"/>
    <property type="evidence" value="ECO:0007669"/>
    <property type="project" value="EnsemblFungi"/>
</dbReference>
<dbReference type="GO" id="GO:0006357">
    <property type="term" value="P:regulation of transcription by RNA polymerase II"/>
    <property type="evidence" value="ECO:0007669"/>
    <property type="project" value="TreeGrafter"/>
</dbReference>
<dbReference type="CDD" id="cd04301">
    <property type="entry name" value="NAT_SF"/>
    <property type="match status" value="1"/>
</dbReference>
<dbReference type="FunFam" id="1.10.10.10:FF:000526">
    <property type="entry name" value="Histone acetyltransferase"/>
    <property type="match status" value="1"/>
</dbReference>
<dbReference type="FunFam" id="3.30.60.60:FF:000001">
    <property type="entry name" value="Histone acetyltransferase"/>
    <property type="match status" value="1"/>
</dbReference>
<dbReference type="FunFam" id="3.40.630.30:FF:000002">
    <property type="entry name" value="Histone acetyltransferase"/>
    <property type="match status" value="1"/>
</dbReference>
<dbReference type="Gene3D" id="2.30.30.140">
    <property type="match status" value="1"/>
</dbReference>
<dbReference type="Gene3D" id="3.40.630.30">
    <property type="match status" value="1"/>
</dbReference>
<dbReference type="Gene3D" id="3.30.60.60">
    <property type="entry name" value="N-acetyl transferase-like"/>
    <property type="match status" value="1"/>
</dbReference>
<dbReference type="Gene3D" id="1.10.10.10">
    <property type="entry name" value="Winged helix-like DNA-binding domain superfamily/Winged helix DNA-binding domain"/>
    <property type="match status" value="1"/>
</dbReference>
<dbReference type="InterPro" id="IPR016181">
    <property type="entry name" value="Acyl_CoA_acyltransferase"/>
</dbReference>
<dbReference type="InterPro" id="IPR016197">
    <property type="entry name" value="Chromo-like_dom_sf"/>
</dbReference>
<dbReference type="InterPro" id="IPR000953">
    <property type="entry name" value="Chromo/chromo_shadow_dom"/>
</dbReference>
<dbReference type="InterPro" id="IPR002717">
    <property type="entry name" value="HAT_MYST-type"/>
</dbReference>
<dbReference type="InterPro" id="IPR050603">
    <property type="entry name" value="MYST_HAT"/>
</dbReference>
<dbReference type="InterPro" id="IPR025995">
    <property type="entry name" value="Tudor-knot"/>
</dbReference>
<dbReference type="InterPro" id="IPR036388">
    <property type="entry name" value="WH-like_DNA-bd_sf"/>
</dbReference>
<dbReference type="InterPro" id="IPR040706">
    <property type="entry name" value="Zf-MYST"/>
</dbReference>
<dbReference type="PANTHER" id="PTHR10615">
    <property type="entry name" value="HISTONE ACETYLTRANSFERASE"/>
    <property type="match status" value="1"/>
</dbReference>
<dbReference type="PANTHER" id="PTHR10615:SF218">
    <property type="entry name" value="HISTONE ACETYLTRANSFERASE ESA1"/>
    <property type="match status" value="1"/>
</dbReference>
<dbReference type="Pfam" id="PF01853">
    <property type="entry name" value="MOZ_SAS"/>
    <property type="match status" value="1"/>
</dbReference>
<dbReference type="Pfam" id="PF11717">
    <property type="entry name" value="Tudor-knot"/>
    <property type="match status" value="1"/>
</dbReference>
<dbReference type="Pfam" id="PF17772">
    <property type="entry name" value="zf-MYST"/>
    <property type="match status" value="1"/>
</dbReference>
<dbReference type="SMART" id="SM00298">
    <property type="entry name" value="CHROMO"/>
    <property type="match status" value="1"/>
</dbReference>
<dbReference type="SUPFAM" id="SSF55729">
    <property type="entry name" value="Acyl-CoA N-acyltransferases (Nat)"/>
    <property type="match status" value="1"/>
</dbReference>
<dbReference type="SUPFAM" id="SSF54160">
    <property type="entry name" value="Chromo domain-like"/>
    <property type="match status" value="1"/>
</dbReference>
<dbReference type="PROSITE" id="PS51726">
    <property type="entry name" value="MYST_HAT"/>
    <property type="match status" value="1"/>
</dbReference>
<organism>
    <name type="scientific">Candida glabrata (strain ATCC 2001 / BCRC 20586 / JCM 3761 / NBRC 0622 / NRRL Y-65 / CBS 138)</name>
    <name type="common">Yeast</name>
    <name type="synonym">Nakaseomyces glabratus</name>
    <dbReference type="NCBI Taxonomy" id="284593"/>
    <lineage>
        <taxon>Eukaryota</taxon>
        <taxon>Fungi</taxon>
        <taxon>Dikarya</taxon>
        <taxon>Ascomycota</taxon>
        <taxon>Saccharomycotina</taxon>
        <taxon>Saccharomycetes</taxon>
        <taxon>Saccharomycetales</taxon>
        <taxon>Saccharomycetaceae</taxon>
        <taxon>Nakaseomyces</taxon>
    </lineage>
</organism>
<evidence type="ECO:0000250" key="1"/>
<evidence type="ECO:0000250" key="2">
    <source>
        <dbReference type="UniProtKB" id="O94446"/>
    </source>
</evidence>
<evidence type="ECO:0000250" key="3">
    <source>
        <dbReference type="UniProtKB" id="Q08649"/>
    </source>
</evidence>
<evidence type="ECO:0000255" key="4"/>
<evidence type="ECO:0000255" key="5">
    <source>
        <dbReference type="PROSITE-ProRule" id="PRU01063"/>
    </source>
</evidence>
<evidence type="ECO:0000256" key="6">
    <source>
        <dbReference type="SAM" id="MobiDB-lite"/>
    </source>
</evidence>
<evidence type="ECO:0000305" key="7"/>
<feature type="chain" id="PRO_0000051554" description="Histone acetyltransferase ESA1">
    <location>
        <begin position="1"/>
        <end position="446"/>
    </location>
</feature>
<feature type="domain" description="Tudor-knot" evidence="4">
    <location>
        <begin position="24"/>
        <end position="75"/>
    </location>
</feature>
<feature type="domain" description="MYST-type HAT" evidence="5">
    <location>
        <begin position="163"/>
        <end position="434"/>
    </location>
</feature>
<feature type="zinc finger region" description="C2HC MYST-type; degenerate" evidence="5">
    <location>
        <begin position="196"/>
        <end position="221"/>
    </location>
</feature>
<feature type="region of interest" description="Disordered" evidence="6">
    <location>
        <begin position="86"/>
        <end position="121"/>
    </location>
</feature>
<feature type="short sequence motif" description="ESA1-RPD3 motif" evidence="1">
    <location>
        <begin position="246"/>
        <end position="267"/>
    </location>
</feature>
<feature type="active site" description="Proton donor/acceptor" evidence="3">
    <location>
        <position position="339"/>
    </location>
</feature>
<feature type="binding site" evidence="3">
    <location>
        <begin position="304"/>
        <end position="308"/>
    </location>
    <ligand>
        <name>acetyl-CoA</name>
        <dbReference type="ChEBI" id="CHEBI:57288"/>
    </ligand>
</feature>
<feature type="binding site" evidence="3">
    <location>
        <begin position="313"/>
        <end position="319"/>
    </location>
    <ligand>
        <name>acetyl-CoA</name>
        <dbReference type="ChEBI" id="CHEBI:57288"/>
    </ligand>
</feature>
<feature type="binding site" evidence="3">
    <location>
        <position position="343"/>
    </location>
    <ligand>
        <name>acetyl-CoA</name>
        <dbReference type="ChEBI" id="CHEBI:57288"/>
    </ligand>
</feature>
<feature type="site" description="Important for catalytic activity" evidence="3">
    <location>
        <position position="305"/>
    </location>
</feature>
<feature type="modified residue" description="N6-acetyllysine; by autocatalysis" evidence="3">
    <location>
        <position position="263"/>
    </location>
</feature>
<gene>
    <name type="primary">ESA1</name>
    <name type="ordered locus">CAGL0J03696g</name>
</gene>
<proteinExistence type="inferred from homology"/>
<name>ESA1_CANGA</name>
<keyword id="KW-0007">Acetylation</keyword>
<keyword id="KW-0010">Activator</keyword>
<keyword id="KW-0156">Chromatin regulator</keyword>
<keyword id="KW-0158">Chromosome</keyword>
<keyword id="KW-0227">DNA damage</keyword>
<keyword id="KW-0234">DNA repair</keyword>
<keyword id="KW-0539">Nucleus</keyword>
<keyword id="KW-1185">Reference proteome</keyword>
<keyword id="KW-0804">Transcription</keyword>
<keyword id="KW-0805">Transcription regulation</keyword>
<keyword id="KW-0808">Transferase</keyword>
<reference key="1">
    <citation type="journal article" date="2004" name="Nature">
        <title>Genome evolution in yeasts.</title>
        <authorList>
            <person name="Dujon B."/>
            <person name="Sherman D."/>
            <person name="Fischer G."/>
            <person name="Durrens P."/>
            <person name="Casaregola S."/>
            <person name="Lafontaine I."/>
            <person name="de Montigny J."/>
            <person name="Marck C."/>
            <person name="Neuveglise C."/>
            <person name="Talla E."/>
            <person name="Goffard N."/>
            <person name="Frangeul L."/>
            <person name="Aigle M."/>
            <person name="Anthouard V."/>
            <person name="Babour A."/>
            <person name="Barbe V."/>
            <person name="Barnay S."/>
            <person name="Blanchin S."/>
            <person name="Beckerich J.-M."/>
            <person name="Beyne E."/>
            <person name="Bleykasten C."/>
            <person name="Boisrame A."/>
            <person name="Boyer J."/>
            <person name="Cattolico L."/>
            <person name="Confanioleri F."/>
            <person name="de Daruvar A."/>
            <person name="Despons L."/>
            <person name="Fabre E."/>
            <person name="Fairhead C."/>
            <person name="Ferry-Dumazet H."/>
            <person name="Groppi A."/>
            <person name="Hantraye F."/>
            <person name="Hennequin C."/>
            <person name="Jauniaux N."/>
            <person name="Joyet P."/>
            <person name="Kachouri R."/>
            <person name="Kerrest A."/>
            <person name="Koszul R."/>
            <person name="Lemaire M."/>
            <person name="Lesur I."/>
            <person name="Ma L."/>
            <person name="Muller H."/>
            <person name="Nicaud J.-M."/>
            <person name="Nikolski M."/>
            <person name="Oztas S."/>
            <person name="Ozier-Kalogeropoulos O."/>
            <person name="Pellenz S."/>
            <person name="Potier S."/>
            <person name="Richard G.-F."/>
            <person name="Straub M.-L."/>
            <person name="Suleau A."/>
            <person name="Swennen D."/>
            <person name="Tekaia F."/>
            <person name="Wesolowski-Louvel M."/>
            <person name="Westhof E."/>
            <person name="Wirth B."/>
            <person name="Zeniou-Meyer M."/>
            <person name="Zivanovic Y."/>
            <person name="Bolotin-Fukuhara M."/>
            <person name="Thierry A."/>
            <person name="Bouchier C."/>
            <person name="Caudron B."/>
            <person name="Scarpelli C."/>
            <person name="Gaillardin C."/>
            <person name="Weissenbach J."/>
            <person name="Wincker P."/>
            <person name="Souciet J.-L."/>
        </authorList>
    </citation>
    <scope>NUCLEOTIDE SEQUENCE [LARGE SCALE GENOMIC DNA]</scope>
    <source>
        <strain>ATCC 2001 / BCRC 20586 / JCM 3761 / NBRC 0622 / NRRL Y-65 / CBS 138</strain>
    </source>
</reference>